<name>Y402_ARCFU</name>
<organism>
    <name type="scientific">Archaeoglobus fulgidus (strain ATCC 49558 / DSM 4304 / JCM 9628 / NBRC 100126 / VC-16)</name>
    <dbReference type="NCBI Taxonomy" id="224325"/>
    <lineage>
        <taxon>Archaea</taxon>
        <taxon>Methanobacteriati</taxon>
        <taxon>Methanobacteriota</taxon>
        <taxon>Archaeoglobi</taxon>
        <taxon>Archaeoglobales</taxon>
        <taxon>Archaeoglobaceae</taxon>
        <taxon>Archaeoglobus</taxon>
    </lineage>
</organism>
<keyword id="KW-1185">Reference proteome</keyword>
<protein>
    <recommendedName>
        <fullName>Uncharacterized protein AF_0402</fullName>
    </recommendedName>
</protein>
<feature type="chain" id="PRO_0000127870" description="Uncharacterized protein AF_0402">
    <location>
        <begin position="1"/>
        <end position="57"/>
    </location>
</feature>
<proteinExistence type="predicted"/>
<sequence length="57" mass="6885">MDIRIMAEKLGFKRVYKEDCELCIMGYTGKRCKYLRKIGKEFYCVRDAAKKDPRLRF</sequence>
<gene>
    <name type="ordered locus">AF_0402</name>
</gene>
<accession>O29845</accession>
<reference key="1">
    <citation type="journal article" date="1997" name="Nature">
        <title>The complete genome sequence of the hyperthermophilic, sulphate-reducing archaeon Archaeoglobus fulgidus.</title>
        <authorList>
            <person name="Klenk H.-P."/>
            <person name="Clayton R.A."/>
            <person name="Tomb J.-F."/>
            <person name="White O."/>
            <person name="Nelson K.E."/>
            <person name="Ketchum K.A."/>
            <person name="Dodson R.J."/>
            <person name="Gwinn M.L."/>
            <person name="Hickey E.K."/>
            <person name="Peterson J.D."/>
            <person name="Richardson D.L."/>
            <person name="Kerlavage A.R."/>
            <person name="Graham D.E."/>
            <person name="Kyrpides N.C."/>
            <person name="Fleischmann R.D."/>
            <person name="Quackenbush J."/>
            <person name="Lee N.H."/>
            <person name="Sutton G.G."/>
            <person name="Gill S.R."/>
            <person name="Kirkness E.F."/>
            <person name="Dougherty B.A."/>
            <person name="McKenney K."/>
            <person name="Adams M.D."/>
            <person name="Loftus B.J."/>
            <person name="Peterson S.N."/>
            <person name="Reich C.I."/>
            <person name="McNeil L.K."/>
            <person name="Badger J.H."/>
            <person name="Glodek A."/>
            <person name="Zhou L."/>
            <person name="Overbeek R."/>
            <person name="Gocayne J.D."/>
            <person name="Weidman J.F."/>
            <person name="McDonald L.A."/>
            <person name="Utterback T.R."/>
            <person name="Cotton M.D."/>
            <person name="Spriggs T."/>
            <person name="Artiach P."/>
            <person name="Kaine B.P."/>
            <person name="Sykes S.M."/>
            <person name="Sadow P.W."/>
            <person name="D'Andrea K.P."/>
            <person name="Bowman C."/>
            <person name="Fujii C."/>
            <person name="Garland S.A."/>
            <person name="Mason T.M."/>
            <person name="Olsen G.J."/>
            <person name="Fraser C.M."/>
            <person name="Smith H.O."/>
            <person name="Woese C.R."/>
            <person name="Venter J.C."/>
        </authorList>
    </citation>
    <scope>NUCLEOTIDE SEQUENCE [LARGE SCALE GENOMIC DNA]</scope>
    <source>
        <strain>ATCC 49558 / DSM 4304 / JCM 9628 / NBRC 100126 / VC-16</strain>
    </source>
</reference>
<dbReference type="EMBL" id="AE000782">
    <property type="protein sequence ID" value="AAB90836.1"/>
    <property type="molecule type" value="Genomic_DNA"/>
</dbReference>
<dbReference type="PIR" id="B69300">
    <property type="entry name" value="B69300"/>
</dbReference>
<dbReference type="STRING" id="224325.AF_0402"/>
<dbReference type="PaxDb" id="224325-AF_0402"/>
<dbReference type="EnsemblBacteria" id="AAB90836">
    <property type="protein sequence ID" value="AAB90836"/>
    <property type="gene ID" value="AF_0402"/>
</dbReference>
<dbReference type="KEGG" id="afu:AF_0402"/>
<dbReference type="eggNOG" id="arCOG10220">
    <property type="taxonomic scope" value="Archaea"/>
</dbReference>
<dbReference type="HOGENOM" id="CLU_2949117_0_0_2"/>
<dbReference type="OrthoDB" id="49478at2157"/>
<dbReference type="Proteomes" id="UP000002199">
    <property type="component" value="Chromosome"/>
</dbReference>